<keyword id="KW-1185">Reference proteome</keyword>
<name>YD1V_SCHPO</name>
<accession>C6Y4A2</accession>
<proteinExistence type="evidence at transcript level"/>
<dbReference type="EMBL" id="CU329670">
    <property type="protein sequence ID" value="CBA11498.1"/>
    <property type="molecule type" value="Genomic_DNA"/>
</dbReference>
<dbReference type="RefSeq" id="XP_002742507.1">
    <property type="nucleotide sequence ID" value="XM_002742461.2"/>
</dbReference>
<dbReference type="iPTMnet" id="C6Y4A2"/>
<dbReference type="PaxDb" id="4896-SPAC4G9.22.1"/>
<dbReference type="EnsemblFungi" id="SPAC4G9.22.1">
    <property type="protein sequence ID" value="SPAC4G9.22.1:pep"/>
    <property type="gene ID" value="SPAC4G9.22"/>
</dbReference>
<dbReference type="PomBase" id="SPAC4G9.22"/>
<dbReference type="VEuPathDB" id="FungiDB:SPAC4G9.22"/>
<dbReference type="HOGENOM" id="CLU_2387436_0_0_1"/>
<dbReference type="InParanoid" id="C6Y4A2"/>
<dbReference type="PRO" id="PR:C6Y4A2"/>
<dbReference type="Proteomes" id="UP000002485">
    <property type="component" value="Chromosome I"/>
</dbReference>
<organism>
    <name type="scientific">Schizosaccharomyces pombe (strain 972 / ATCC 24843)</name>
    <name type="common">Fission yeast</name>
    <dbReference type="NCBI Taxonomy" id="284812"/>
    <lineage>
        <taxon>Eukaryota</taxon>
        <taxon>Fungi</taxon>
        <taxon>Dikarya</taxon>
        <taxon>Ascomycota</taxon>
        <taxon>Taphrinomycotina</taxon>
        <taxon>Schizosaccharomycetes</taxon>
        <taxon>Schizosaccharomycetales</taxon>
        <taxon>Schizosaccharomycetaceae</taxon>
        <taxon>Schizosaccharomyces</taxon>
    </lineage>
</organism>
<sequence>MSLKMFVNEKFIEDWCRETGEQVDHQLVCTVGEKSKEKICLLERTCSLEGLSTVLMSENFKDTLEEELKDCDSHLDRAANDSPSLSCILGNAND</sequence>
<feature type="chain" id="PRO_0000389126" description="Uncharacterized protein C4G9.22">
    <location>
        <begin position="1"/>
        <end position="94"/>
    </location>
</feature>
<gene>
    <name type="ORF">SPAC4G9.22</name>
</gene>
<protein>
    <recommendedName>
        <fullName>Uncharacterized protein C4G9.22</fullName>
    </recommendedName>
</protein>
<reference key="1">
    <citation type="journal article" date="2002" name="Nature">
        <title>The genome sequence of Schizosaccharomyces pombe.</title>
        <authorList>
            <person name="Wood V."/>
            <person name="Gwilliam R."/>
            <person name="Rajandream M.A."/>
            <person name="Lyne M.H."/>
            <person name="Lyne R."/>
            <person name="Stewart A."/>
            <person name="Sgouros J.G."/>
            <person name="Peat N."/>
            <person name="Hayles J."/>
            <person name="Baker S.G."/>
            <person name="Basham D."/>
            <person name="Bowman S."/>
            <person name="Brooks K."/>
            <person name="Brown D."/>
            <person name="Brown S."/>
            <person name="Chillingworth T."/>
            <person name="Churcher C.M."/>
            <person name="Collins M."/>
            <person name="Connor R."/>
            <person name="Cronin A."/>
            <person name="Davis P."/>
            <person name="Feltwell T."/>
            <person name="Fraser A."/>
            <person name="Gentles S."/>
            <person name="Goble A."/>
            <person name="Hamlin N."/>
            <person name="Harris D.E."/>
            <person name="Hidalgo J."/>
            <person name="Hodgson G."/>
            <person name="Holroyd S."/>
            <person name="Hornsby T."/>
            <person name="Howarth S."/>
            <person name="Huckle E.J."/>
            <person name="Hunt S."/>
            <person name="Jagels K."/>
            <person name="James K.D."/>
            <person name="Jones L."/>
            <person name="Jones M."/>
            <person name="Leather S."/>
            <person name="McDonald S."/>
            <person name="McLean J."/>
            <person name="Mooney P."/>
            <person name="Moule S."/>
            <person name="Mungall K.L."/>
            <person name="Murphy L.D."/>
            <person name="Niblett D."/>
            <person name="Odell C."/>
            <person name="Oliver K."/>
            <person name="O'Neil S."/>
            <person name="Pearson D."/>
            <person name="Quail M.A."/>
            <person name="Rabbinowitsch E."/>
            <person name="Rutherford K.M."/>
            <person name="Rutter S."/>
            <person name="Saunders D."/>
            <person name="Seeger K."/>
            <person name="Sharp S."/>
            <person name="Skelton J."/>
            <person name="Simmonds M.N."/>
            <person name="Squares R."/>
            <person name="Squares S."/>
            <person name="Stevens K."/>
            <person name="Taylor K."/>
            <person name="Taylor R.G."/>
            <person name="Tivey A."/>
            <person name="Walsh S.V."/>
            <person name="Warren T."/>
            <person name="Whitehead S."/>
            <person name="Woodward J.R."/>
            <person name="Volckaert G."/>
            <person name="Aert R."/>
            <person name="Robben J."/>
            <person name="Grymonprez B."/>
            <person name="Weltjens I."/>
            <person name="Vanstreels E."/>
            <person name="Rieger M."/>
            <person name="Schaefer M."/>
            <person name="Mueller-Auer S."/>
            <person name="Gabel C."/>
            <person name="Fuchs M."/>
            <person name="Duesterhoeft A."/>
            <person name="Fritzc C."/>
            <person name="Holzer E."/>
            <person name="Moestl D."/>
            <person name="Hilbert H."/>
            <person name="Borzym K."/>
            <person name="Langer I."/>
            <person name="Beck A."/>
            <person name="Lehrach H."/>
            <person name="Reinhardt R."/>
            <person name="Pohl T.M."/>
            <person name="Eger P."/>
            <person name="Zimmermann W."/>
            <person name="Wedler H."/>
            <person name="Wambutt R."/>
            <person name="Purnelle B."/>
            <person name="Goffeau A."/>
            <person name="Cadieu E."/>
            <person name="Dreano S."/>
            <person name="Gloux S."/>
            <person name="Lelaure V."/>
            <person name="Mottier S."/>
            <person name="Galibert F."/>
            <person name="Aves S.J."/>
            <person name="Xiang Z."/>
            <person name="Hunt C."/>
            <person name="Moore K."/>
            <person name="Hurst S.M."/>
            <person name="Lucas M."/>
            <person name="Rochet M."/>
            <person name="Gaillardin C."/>
            <person name="Tallada V.A."/>
            <person name="Garzon A."/>
            <person name="Thode G."/>
            <person name="Daga R.R."/>
            <person name="Cruzado L."/>
            <person name="Jimenez J."/>
            <person name="Sanchez M."/>
            <person name="del Rey F."/>
            <person name="Benito J."/>
            <person name="Dominguez A."/>
            <person name="Revuelta J.L."/>
            <person name="Moreno S."/>
            <person name="Armstrong J."/>
            <person name="Forsburg S.L."/>
            <person name="Cerutti L."/>
            <person name="Lowe T."/>
            <person name="McCombie W.R."/>
            <person name="Paulsen I."/>
            <person name="Potashkin J."/>
            <person name="Shpakovski G.V."/>
            <person name="Ussery D."/>
            <person name="Barrell B.G."/>
            <person name="Nurse P."/>
        </authorList>
    </citation>
    <scope>NUCLEOTIDE SEQUENCE [LARGE SCALE GENOMIC DNA]</scope>
    <source>
        <strain>972 / ATCC 24843</strain>
    </source>
</reference>
<reference key="2">
    <citation type="journal article" date="2008" name="Nature">
        <title>Dynamic repertoire of a eukaryotic transcriptome surveyed at single-nucleotide resolution.</title>
        <authorList>
            <person name="Wilhelm B.T."/>
            <person name="Marguerat S."/>
            <person name="Watt S."/>
            <person name="Schubert F."/>
            <person name="Wood V."/>
            <person name="Goodhead I."/>
            <person name="Penkett C.J."/>
            <person name="Rogers J."/>
            <person name="Baehler J."/>
        </authorList>
    </citation>
    <scope>IDENTIFICATION</scope>
</reference>